<name>T2R1_CERSP</name>
<proteinExistence type="evidence at protein level"/>
<sequence>MAGEVEFKGKGQALRLGIQQELGGGPLSIFGAAAQKHDLSIREVTAGVLTKLAEDFPNLEFQLRTSLTKKAINEKLRSFDPRLGQALFVESASIRPDGGITEVKDRHGNWRVILVGESKHQGNDVEKILAGVLQGKAKDQDFMAAGNAIERMHKNVLELRNYMLDEKHFPYVVFLQGSNFATESFEVTRPDGRVVKIVHDSGMLNRIDRVTASSLSREINQNYCENIVVRAGSFDHMFQIASLYCKAAPWTAGEMAEAMLAVAKTSLRIIADDLDQN</sequence>
<keyword id="KW-0903">Direct protein sequencing</keyword>
<keyword id="KW-0255">Endonuclease</keyword>
<keyword id="KW-0378">Hydrolase</keyword>
<keyword id="KW-0460">Magnesium</keyword>
<keyword id="KW-0540">Nuclease</keyword>
<keyword id="KW-0680">Restriction system</keyword>
<evidence type="ECO:0000269" key="1">
    <source>
    </source>
</evidence>
<evidence type="ECO:0000269" key="2">
    <source>
    </source>
</evidence>
<evidence type="ECO:0000303" key="3">
    <source>
    </source>
</evidence>
<evidence type="ECO:0000303" key="4">
    <source>
    </source>
</evidence>
<reference key="1">
    <citation type="journal article" date="1989" name="Gene">
        <title>Comparison of the nucleotide and amino acid sequences of the RsrI and EcoRI restriction endonucleases.</title>
        <authorList>
            <person name="Stephenson F.H."/>
            <person name="Ballard B.T."/>
            <person name="Boyer H.W."/>
            <person name="Rosenberg J.M."/>
            <person name="Greene P.J."/>
        </authorList>
    </citation>
    <scope>NUCLEOTIDE SEQUENCE [GENOMIC DNA]</scope>
    <scope>PROTEIN SEQUENCE OF 2-35</scope>
</reference>
<reference key="2">
    <citation type="journal article" date="1988" name="Nucleic Acids Res.">
        <title>Restriction endonuclease RsrI from Rhodobacter sphaeroides, an isoschizomer of EcoRI: purification and properties.</title>
        <authorList>
            <person name="Aiken C."/>
            <person name="Gumport R.I."/>
        </authorList>
    </citation>
    <scope>PRELIMINARY PROTEIN SEQUENCE OF 2-41</scope>
    <scope>FUNCTION</scope>
    <scope>CATALYTIC ACTIVITY</scope>
    <scope>SUBUNIT</scope>
</reference>
<reference key="3">
    <citation type="journal article" date="2003" name="Nucleic Acids Res.">
        <title>A nomenclature for restriction enzymes, DNA methyltransferases, homing endonucleases and their genes.</title>
        <authorList>
            <person name="Roberts R.J."/>
            <person name="Belfort M."/>
            <person name="Bestor T."/>
            <person name="Bhagwat A.S."/>
            <person name="Bickle T.A."/>
            <person name="Bitinaite J."/>
            <person name="Blumenthal R.M."/>
            <person name="Degtyarev S.K."/>
            <person name="Dryden D.T."/>
            <person name="Dybvig K."/>
            <person name="Firman K."/>
            <person name="Gromova E.S."/>
            <person name="Gumport R.I."/>
            <person name="Halford S.E."/>
            <person name="Hattman S."/>
            <person name="Heitman J."/>
            <person name="Hornby D.P."/>
            <person name="Janulaitis A."/>
            <person name="Jeltsch A."/>
            <person name="Josephsen J."/>
            <person name="Kiss A."/>
            <person name="Klaenhammer T.R."/>
            <person name="Kobayashi I."/>
            <person name="Kong H."/>
            <person name="Krueger D.H."/>
            <person name="Lacks S."/>
            <person name="Marinus M.G."/>
            <person name="Miyahara M."/>
            <person name="Morgan R.D."/>
            <person name="Murray N.E."/>
            <person name="Nagaraja V."/>
            <person name="Piekarowicz A."/>
            <person name="Pingoud A."/>
            <person name="Raleigh E."/>
            <person name="Rao D.N."/>
            <person name="Reich N."/>
            <person name="Repin V.E."/>
            <person name="Selker E.U."/>
            <person name="Shaw P.C."/>
            <person name="Stein D.C."/>
            <person name="Stoddard B.L."/>
            <person name="Szybalski W."/>
            <person name="Trautner T.A."/>
            <person name="Van Etten J.L."/>
            <person name="Vitor J.M."/>
            <person name="Wilson G.G."/>
            <person name="Xu S.Y."/>
        </authorList>
    </citation>
    <scope>NOMENCLATURE</scope>
    <scope>SUBTYPE</scope>
</reference>
<gene>
    <name type="primary">rsrIR</name>
</gene>
<organism>
    <name type="scientific">Cereibacter sphaeroides</name>
    <name type="common">Rhodobacter sphaeroides</name>
    <dbReference type="NCBI Taxonomy" id="1063"/>
    <lineage>
        <taxon>Bacteria</taxon>
        <taxon>Pseudomonadati</taxon>
        <taxon>Pseudomonadota</taxon>
        <taxon>Alphaproteobacteria</taxon>
        <taxon>Rhodobacterales</taxon>
        <taxon>Paracoccaceae</taxon>
        <taxon>Cereibacter</taxon>
    </lineage>
</organism>
<accession>P21763</accession>
<comment type="function">
    <text evidence="2 3">A P subtype restriction enzyme that recognizes the double-stranded sequence 5'-GAATTC-3' and cleaves after G-1.</text>
</comment>
<comment type="catalytic activity">
    <reaction evidence="2">
        <text>Endonucleolytic cleavage of DNA to give specific double-stranded fragments with terminal 5'-phosphates.</text>
        <dbReference type="EC" id="3.1.21.4"/>
    </reaction>
</comment>
<comment type="cofactor">
    <cofactor>
        <name>Mg(2+)</name>
        <dbReference type="ChEBI" id="CHEBI:18420"/>
    </cofactor>
</comment>
<comment type="subunit">
    <text evidence="2">Homodimer.</text>
</comment>
<comment type="similarity">
    <text evidence="4">Belongs to the EcoRI type II restriction endonuclease family.</text>
</comment>
<dbReference type="EC" id="3.1.21.4" evidence="2"/>
<dbReference type="EMBL" id="X14697">
    <property type="protein sequence ID" value="CAA32827.1"/>
    <property type="molecule type" value="Genomic_DNA"/>
</dbReference>
<dbReference type="PIR" id="JW0016">
    <property type="entry name" value="JW0016"/>
</dbReference>
<dbReference type="PIR" id="S03688">
    <property type="entry name" value="S03688"/>
</dbReference>
<dbReference type="SMR" id="P21763"/>
<dbReference type="REBASE" id="1572">
    <property type="entry name" value="RsrI"/>
</dbReference>
<dbReference type="PRO" id="PR:P21763"/>
<dbReference type="GO" id="GO:0003677">
    <property type="term" value="F:DNA binding"/>
    <property type="evidence" value="ECO:0007669"/>
    <property type="project" value="InterPro"/>
</dbReference>
<dbReference type="GO" id="GO:0000287">
    <property type="term" value="F:magnesium ion binding"/>
    <property type="evidence" value="ECO:0007669"/>
    <property type="project" value="InterPro"/>
</dbReference>
<dbReference type="GO" id="GO:0009036">
    <property type="term" value="F:type II site-specific deoxyribonuclease activity"/>
    <property type="evidence" value="ECO:0007669"/>
    <property type="project" value="UniProtKB-EC"/>
</dbReference>
<dbReference type="GO" id="GO:0009307">
    <property type="term" value="P:DNA restriction-modification system"/>
    <property type="evidence" value="ECO:0007669"/>
    <property type="project" value="UniProtKB-KW"/>
</dbReference>
<dbReference type="CDD" id="cd00943">
    <property type="entry name" value="EcoRI-like"/>
    <property type="match status" value="1"/>
</dbReference>
<dbReference type="Gene3D" id="3.40.580.10">
    <property type="entry name" value="Eco RI Endonuclease, subunit A"/>
    <property type="match status" value="1"/>
</dbReference>
<dbReference type="InterPro" id="IPR011335">
    <property type="entry name" value="Restrct_endonuc-II-like"/>
</dbReference>
<dbReference type="InterPro" id="IPR004221">
    <property type="entry name" value="Restrct_endonuc_II_EcoRI"/>
</dbReference>
<dbReference type="InterPro" id="IPR011336">
    <property type="entry name" value="Restrct_endonuc_II_EcoRI/MunI"/>
</dbReference>
<dbReference type="InterPro" id="IPR018131">
    <property type="entry name" value="Restrct_endonuc_II_EcoRI_Pbac"/>
</dbReference>
<dbReference type="Pfam" id="PF02963">
    <property type="entry name" value="EcoRI"/>
    <property type="match status" value="1"/>
</dbReference>
<dbReference type="PIRSF" id="PIRSF001002">
    <property type="entry name" value="Restrict_endonuc_II_EcoRI"/>
    <property type="match status" value="1"/>
</dbReference>
<dbReference type="SUPFAM" id="SSF52980">
    <property type="entry name" value="Restriction endonuclease-like"/>
    <property type="match status" value="1"/>
</dbReference>
<feature type="initiator methionine" description="Removed" evidence="1">
    <location>
        <position position="1"/>
    </location>
</feature>
<feature type="chain" id="PRO_0000077357" description="Type II restriction enzyme RsrI">
    <location>
        <begin position="2"/>
        <end position="277"/>
    </location>
</feature>
<protein>
    <recommendedName>
        <fullName evidence="3">Type II restriction enzyme RsrI</fullName>
        <shortName>R.RsrI</shortName>
        <ecNumber evidence="2">3.1.21.4</ecNumber>
    </recommendedName>
    <alternativeName>
        <fullName>Endonuclease RsrI</fullName>
    </alternativeName>
    <alternativeName>
        <fullName>Type-2 restriction enzyme RsrI</fullName>
    </alternativeName>
</protein>